<sequence>MAEPTEKRLVSETGVAARVAQIVEGPIEGLGFRLVRVKISNTNGRTVQIMAERPDGTMGVDECEAVSRAISPILDLEDPVGDAYYLEVSSPGIDRPLVRVSDFERWAGYEAKVELAVPMDGRKRFRGIIGVPSADGTTVPIDLPDVKPGLPSRIDVPLRDLGEAHLVLTDELIRESLRRGSAPPQDGEEGDEEEGAEAEHEAPQVRFIPQPKRPKPKLDKKSDKPVKAKKPKPGGGIVTKAARLKNRDTLH</sequence>
<gene>
    <name evidence="1" type="primary">rimP</name>
    <name type="ordered locus">Mext_2700</name>
</gene>
<evidence type="ECO:0000255" key="1">
    <source>
        <dbReference type="HAMAP-Rule" id="MF_01077"/>
    </source>
</evidence>
<evidence type="ECO:0000256" key="2">
    <source>
        <dbReference type="SAM" id="MobiDB-lite"/>
    </source>
</evidence>
<accession>A9W685</accession>
<proteinExistence type="inferred from homology"/>
<keyword id="KW-0963">Cytoplasm</keyword>
<keyword id="KW-0690">Ribosome biogenesis</keyword>
<feature type="chain" id="PRO_0000384702" description="Ribosome maturation factor RimP">
    <location>
        <begin position="1"/>
        <end position="251"/>
    </location>
</feature>
<feature type="region of interest" description="Disordered" evidence="2">
    <location>
        <begin position="176"/>
        <end position="251"/>
    </location>
</feature>
<feature type="compositionally biased region" description="Acidic residues" evidence="2">
    <location>
        <begin position="186"/>
        <end position="196"/>
    </location>
</feature>
<feature type="compositionally biased region" description="Basic and acidic residues" evidence="2">
    <location>
        <begin position="216"/>
        <end position="226"/>
    </location>
</feature>
<name>RIMP_METEP</name>
<reference key="1">
    <citation type="submission" date="2007-12" db="EMBL/GenBank/DDBJ databases">
        <title>Complete sequence of Methylobacterium extorquens PA1.</title>
        <authorList>
            <consortium name="US DOE Joint Genome Institute"/>
            <person name="Copeland A."/>
            <person name="Lucas S."/>
            <person name="Lapidus A."/>
            <person name="Barry K."/>
            <person name="Glavina del Rio T."/>
            <person name="Dalin E."/>
            <person name="Tice H."/>
            <person name="Pitluck S."/>
            <person name="Saunders E."/>
            <person name="Brettin T."/>
            <person name="Bruce D."/>
            <person name="Detter J.C."/>
            <person name="Han C."/>
            <person name="Schmutz J."/>
            <person name="Larimer F."/>
            <person name="Land M."/>
            <person name="Hauser L."/>
            <person name="Kyrpides N."/>
            <person name="Kim E."/>
            <person name="Marx C."/>
            <person name="Richardson P."/>
        </authorList>
    </citation>
    <scope>NUCLEOTIDE SEQUENCE [LARGE SCALE GENOMIC DNA]</scope>
    <source>
        <strain>PA1</strain>
    </source>
</reference>
<protein>
    <recommendedName>
        <fullName evidence="1">Ribosome maturation factor RimP</fullName>
    </recommendedName>
</protein>
<dbReference type="EMBL" id="CP000908">
    <property type="protein sequence ID" value="ABY31091.1"/>
    <property type="molecule type" value="Genomic_DNA"/>
</dbReference>
<dbReference type="RefSeq" id="WP_003598935.1">
    <property type="nucleotide sequence ID" value="NC_010172.1"/>
</dbReference>
<dbReference type="SMR" id="A9W685"/>
<dbReference type="KEGG" id="mex:Mext_2700"/>
<dbReference type="eggNOG" id="COG0779">
    <property type="taxonomic scope" value="Bacteria"/>
</dbReference>
<dbReference type="HOGENOM" id="CLU_070525_0_0_5"/>
<dbReference type="BioCyc" id="MEXT419610:MEXT_RS13615-MONOMER"/>
<dbReference type="GO" id="GO:0005829">
    <property type="term" value="C:cytosol"/>
    <property type="evidence" value="ECO:0007669"/>
    <property type="project" value="TreeGrafter"/>
</dbReference>
<dbReference type="GO" id="GO:0000028">
    <property type="term" value="P:ribosomal small subunit assembly"/>
    <property type="evidence" value="ECO:0007669"/>
    <property type="project" value="TreeGrafter"/>
</dbReference>
<dbReference type="GO" id="GO:0006412">
    <property type="term" value="P:translation"/>
    <property type="evidence" value="ECO:0007669"/>
    <property type="project" value="TreeGrafter"/>
</dbReference>
<dbReference type="CDD" id="cd01734">
    <property type="entry name" value="YlxS_C"/>
    <property type="match status" value="1"/>
</dbReference>
<dbReference type="Gene3D" id="3.30.300.70">
    <property type="entry name" value="RimP-like superfamily, N-terminal"/>
    <property type="match status" value="1"/>
</dbReference>
<dbReference type="HAMAP" id="MF_01077">
    <property type="entry name" value="RimP"/>
    <property type="match status" value="1"/>
</dbReference>
<dbReference type="InterPro" id="IPR003728">
    <property type="entry name" value="Ribosome_maturation_RimP"/>
</dbReference>
<dbReference type="InterPro" id="IPR028998">
    <property type="entry name" value="RimP_C"/>
</dbReference>
<dbReference type="InterPro" id="IPR036847">
    <property type="entry name" value="RimP_C_sf"/>
</dbReference>
<dbReference type="InterPro" id="IPR028989">
    <property type="entry name" value="RimP_N"/>
</dbReference>
<dbReference type="InterPro" id="IPR035956">
    <property type="entry name" value="RimP_N_sf"/>
</dbReference>
<dbReference type="NCBIfam" id="NF000932">
    <property type="entry name" value="PRK00092.2-5"/>
    <property type="match status" value="1"/>
</dbReference>
<dbReference type="PANTHER" id="PTHR33867">
    <property type="entry name" value="RIBOSOME MATURATION FACTOR RIMP"/>
    <property type="match status" value="1"/>
</dbReference>
<dbReference type="PANTHER" id="PTHR33867:SF1">
    <property type="entry name" value="RIBOSOME MATURATION FACTOR RIMP"/>
    <property type="match status" value="1"/>
</dbReference>
<dbReference type="Pfam" id="PF17384">
    <property type="entry name" value="DUF150_C"/>
    <property type="match status" value="1"/>
</dbReference>
<dbReference type="Pfam" id="PF02576">
    <property type="entry name" value="RimP_N"/>
    <property type="match status" value="1"/>
</dbReference>
<dbReference type="SUPFAM" id="SSF74942">
    <property type="entry name" value="YhbC-like, C-terminal domain"/>
    <property type="match status" value="1"/>
</dbReference>
<dbReference type="SUPFAM" id="SSF75420">
    <property type="entry name" value="YhbC-like, N-terminal domain"/>
    <property type="match status" value="1"/>
</dbReference>
<comment type="function">
    <text evidence="1">Required for maturation of 30S ribosomal subunits.</text>
</comment>
<comment type="subcellular location">
    <subcellularLocation>
        <location evidence="1">Cytoplasm</location>
    </subcellularLocation>
</comment>
<comment type="similarity">
    <text evidence="1">Belongs to the RimP family.</text>
</comment>
<organism>
    <name type="scientific">Methylorubrum extorquens (strain PA1)</name>
    <name type="common">Methylobacterium extorquens</name>
    <dbReference type="NCBI Taxonomy" id="419610"/>
    <lineage>
        <taxon>Bacteria</taxon>
        <taxon>Pseudomonadati</taxon>
        <taxon>Pseudomonadota</taxon>
        <taxon>Alphaproteobacteria</taxon>
        <taxon>Hyphomicrobiales</taxon>
        <taxon>Methylobacteriaceae</taxon>
        <taxon>Methylorubrum</taxon>
    </lineage>
</organism>